<reference key="1">
    <citation type="journal article" date="2009" name="Nature">
        <title>Evolution of pathogenicity and sexual reproduction in eight Candida genomes.</title>
        <authorList>
            <person name="Butler G."/>
            <person name="Rasmussen M.D."/>
            <person name="Lin M.F."/>
            <person name="Santos M.A.S."/>
            <person name="Sakthikumar S."/>
            <person name="Munro C.A."/>
            <person name="Rheinbay E."/>
            <person name="Grabherr M."/>
            <person name="Forche A."/>
            <person name="Reedy J.L."/>
            <person name="Agrafioti I."/>
            <person name="Arnaud M.B."/>
            <person name="Bates S."/>
            <person name="Brown A.J.P."/>
            <person name="Brunke S."/>
            <person name="Costanzo M.C."/>
            <person name="Fitzpatrick D.A."/>
            <person name="de Groot P.W.J."/>
            <person name="Harris D."/>
            <person name="Hoyer L.L."/>
            <person name="Hube B."/>
            <person name="Klis F.M."/>
            <person name="Kodira C."/>
            <person name="Lennard N."/>
            <person name="Logue M.E."/>
            <person name="Martin R."/>
            <person name="Neiman A.M."/>
            <person name="Nikolaou E."/>
            <person name="Quail M.A."/>
            <person name="Quinn J."/>
            <person name="Santos M.C."/>
            <person name="Schmitzberger F.F."/>
            <person name="Sherlock G."/>
            <person name="Shah P."/>
            <person name="Silverstein K.A.T."/>
            <person name="Skrzypek M.S."/>
            <person name="Soll D."/>
            <person name="Staggs R."/>
            <person name="Stansfield I."/>
            <person name="Stumpf M.P.H."/>
            <person name="Sudbery P.E."/>
            <person name="Srikantha T."/>
            <person name="Zeng Q."/>
            <person name="Berman J."/>
            <person name="Berriman M."/>
            <person name="Heitman J."/>
            <person name="Gow N.A.R."/>
            <person name="Lorenz M.C."/>
            <person name="Birren B.W."/>
            <person name="Kellis M."/>
            <person name="Cuomo C.A."/>
        </authorList>
    </citation>
    <scope>NUCLEOTIDE SEQUENCE [LARGE SCALE GENOMIC DNA]</scope>
    <source>
        <strain>ATCC 11503 / BCRC 21390 / CBS 2605 / JCM 1781 / NBRC 1676 / NRRL YB-4239</strain>
    </source>
</reference>
<proteinExistence type="inferred from homology"/>
<evidence type="ECO:0000255" key="1">
    <source>
        <dbReference type="HAMAP-Rule" id="MF_03111"/>
    </source>
</evidence>
<evidence type="ECO:0000256" key="2">
    <source>
        <dbReference type="SAM" id="MobiDB-lite"/>
    </source>
</evidence>
<gene>
    <name evidence="1" type="primary">COQ4</name>
    <name type="ORF">LELG_01529</name>
</gene>
<protein>
    <recommendedName>
        <fullName evidence="1">Ubiquinone biosynthesis protein COQ4, mitochondrial</fullName>
    </recommendedName>
    <alternativeName>
        <fullName>4-hydroxy-3-methoxy-5-polyprenylbenzoate decarboxylase</fullName>
        <ecNumber evidence="1">4.1.1.130</ecNumber>
    </alternativeName>
    <alternativeName>
        <fullName evidence="1">Coenzyme Q biosynthesis protein 4</fullName>
    </alternativeName>
</protein>
<feature type="transit peptide" description="Mitochondrion" evidence="1">
    <location>
        <begin position="1"/>
        <end position="35"/>
    </location>
</feature>
<feature type="chain" id="PRO_0000388118" description="Ubiquinone biosynthesis protein COQ4, mitochondrial">
    <location>
        <begin position="36"/>
        <end position="369"/>
    </location>
</feature>
<feature type="region of interest" description="Disordered" evidence="2">
    <location>
        <begin position="329"/>
        <end position="369"/>
    </location>
</feature>
<feature type="compositionally biased region" description="Low complexity" evidence="2">
    <location>
        <begin position="329"/>
        <end position="360"/>
    </location>
</feature>
<feature type="binding site" evidence="1">
    <location>
        <position position="212"/>
    </location>
    <ligand>
        <name>Zn(2+)</name>
        <dbReference type="ChEBI" id="CHEBI:29105"/>
    </ligand>
</feature>
<feature type="binding site" evidence="1">
    <location>
        <position position="213"/>
    </location>
    <ligand>
        <name>Zn(2+)</name>
        <dbReference type="ChEBI" id="CHEBI:29105"/>
    </ligand>
</feature>
<feature type="binding site" evidence="1">
    <location>
        <position position="216"/>
    </location>
    <ligand>
        <name>Zn(2+)</name>
        <dbReference type="ChEBI" id="CHEBI:29105"/>
    </ligand>
</feature>
<feature type="binding site" evidence="1">
    <location>
        <position position="228"/>
    </location>
    <ligand>
        <name>Zn(2+)</name>
        <dbReference type="ChEBI" id="CHEBI:29105"/>
    </ligand>
</feature>
<organism>
    <name type="scientific">Lodderomyces elongisporus (strain ATCC 11503 / CBS 2605 / JCM 1781 / NBRC 1676 / NRRL YB-4239)</name>
    <name type="common">Yeast</name>
    <name type="synonym">Saccharomyces elongisporus</name>
    <dbReference type="NCBI Taxonomy" id="379508"/>
    <lineage>
        <taxon>Eukaryota</taxon>
        <taxon>Fungi</taxon>
        <taxon>Dikarya</taxon>
        <taxon>Ascomycota</taxon>
        <taxon>Saccharomycotina</taxon>
        <taxon>Pichiomycetes</taxon>
        <taxon>Debaryomycetaceae</taxon>
        <taxon>Candida/Lodderomyces clade</taxon>
        <taxon>Lodderomyces</taxon>
    </lineage>
</organism>
<keyword id="KW-0456">Lyase</keyword>
<keyword id="KW-0472">Membrane</keyword>
<keyword id="KW-0479">Metal-binding</keyword>
<keyword id="KW-0496">Mitochondrion</keyword>
<keyword id="KW-0999">Mitochondrion inner membrane</keyword>
<keyword id="KW-1185">Reference proteome</keyword>
<keyword id="KW-0809">Transit peptide</keyword>
<keyword id="KW-0831">Ubiquinone biosynthesis</keyword>
<keyword id="KW-0862">Zinc</keyword>
<name>COQ4_LODEL</name>
<comment type="function">
    <text evidence="1">Lyase that catalyzes the C1-decarboxylation of 4-hydroxy-3-methoxy-5-(all-trans-polyprenyl)benzoic acid into 2-methoxy-6-(all-trans-polyprenyl)phenol during ubiquinone biosynthesis.</text>
</comment>
<comment type="catalytic activity">
    <reaction evidence="1">
        <text>a 4-hydroxy-3-methoxy-5-(all-trans-polyprenyl)benzoate + H(+) = a 2-methoxy-6-(all-trans-polyprenyl)phenol + CO2</text>
        <dbReference type="Rhea" id="RHEA:81179"/>
        <dbReference type="Rhea" id="RHEA-COMP:9551"/>
        <dbReference type="Rhea" id="RHEA-COMP:10931"/>
        <dbReference type="ChEBI" id="CHEBI:15378"/>
        <dbReference type="ChEBI" id="CHEBI:16526"/>
        <dbReference type="ChEBI" id="CHEBI:62731"/>
        <dbReference type="ChEBI" id="CHEBI:84443"/>
        <dbReference type="EC" id="4.1.1.130"/>
    </reaction>
</comment>
<comment type="cofactor">
    <cofactor evidence="1">
        <name>Zn(2+)</name>
        <dbReference type="ChEBI" id="CHEBI:29105"/>
    </cofactor>
</comment>
<comment type="pathway">
    <text evidence="1">Cofactor biosynthesis; ubiquinone biosynthesis.</text>
</comment>
<comment type="subunit">
    <text evidence="1">Component of a multi-subunit COQ enzyme complex, composed of at least COQ3, COQ4, COQ5, COQ6, COQ7 and COQ9.</text>
</comment>
<comment type="subcellular location">
    <subcellularLocation>
        <location evidence="1">Mitochondrion inner membrane</location>
        <topology evidence="1">Peripheral membrane protein</topology>
        <orientation evidence="1">Matrix side</orientation>
    </subcellularLocation>
</comment>
<comment type="similarity">
    <text evidence="1">Belongs to the COQ4 family.</text>
</comment>
<dbReference type="EC" id="4.1.1.130" evidence="1"/>
<dbReference type="EMBL" id="CH981525">
    <property type="protein sequence ID" value="EDK43351.1"/>
    <property type="molecule type" value="Genomic_DNA"/>
</dbReference>
<dbReference type="RefSeq" id="XP_001526701.1">
    <property type="nucleotide sequence ID" value="XM_001526651.1"/>
</dbReference>
<dbReference type="SMR" id="A5DVZ3"/>
<dbReference type="FunCoup" id="A5DVZ3">
    <property type="interactions" value="524"/>
</dbReference>
<dbReference type="STRING" id="379508.A5DVZ3"/>
<dbReference type="GeneID" id="5234152"/>
<dbReference type="KEGG" id="lel:PVL30_001499"/>
<dbReference type="VEuPathDB" id="FungiDB:LELG_01529"/>
<dbReference type="eggNOG" id="KOG3244">
    <property type="taxonomic scope" value="Eukaryota"/>
</dbReference>
<dbReference type="HOGENOM" id="CLU_061241_0_2_1"/>
<dbReference type="InParanoid" id="A5DVZ3"/>
<dbReference type="OMA" id="YYERHFH"/>
<dbReference type="OrthoDB" id="4249at2759"/>
<dbReference type="UniPathway" id="UPA00232"/>
<dbReference type="Proteomes" id="UP000001996">
    <property type="component" value="Unassembled WGS sequence"/>
</dbReference>
<dbReference type="GO" id="GO:0031314">
    <property type="term" value="C:extrinsic component of mitochondrial inner membrane"/>
    <property type="evidence" value="ECO:0007669"/>
    <property type="project" value="UniProtKB-UniRule"/>
</dbReference>
<dbReference type="GO" id="GO:0006744">
    <property type="term" value="P:ubiquinone biosynthetic process"/>
    <property type="evidence" value="ECO:0007669"/>
    <property type="project" value="UniProtKB-UniRule"/>
</dbReference>
<dbReference type="HAMAP" id="MF_03111">
    <property type="entry name" value="Coq4"/>
    <property type="match status" value="1"/>
</dbReference>
<dbReference type="InterPro" id="IPR007715">
    <property type="entry name" value="Coq4"/>
</dbReference>
<dbReference type="InterPro" id="IPR027540">
    <property type="entry name" value="Coq4_euk"/>
</dbReference>
<dbReference type="PANTHER" id="PTHR12922">
    <property type="entry name" value="UBIQUINONE BIOSYNTHESIS PROTEIN"/>
    <property type="match status" value="1"/>
</dbReference>
<dbReference type="PANTHER" id="PTHR12922:SF7">
    <property type="entry name" value="UBIQUINONE BIOSYNTHESIS PROTEIN COQ4 HOMOLOG, MITOCHONDRIAL"/>
    <property type="match status" value="1"/>
</dbReference>
<dbReference type="Pfam" id="PF05019">
    <property type="entry name" value="Coq4"/>
    <property type="match status" value="1"/>
</dbReference>
<accession>A5DVZ3</accession>
<sequence>MLTSQKVSRVLLHSSFLKTPVSTQSRSFVFTTIATTLFGSVLWSKNNVLASKMENHELHYNDPNDKYRKLLEKKRGPAFTRAAAEYPGQVRLYNYEKFLMFLGSSIGSFFHPEENKYIVALGESTAIEPVLKRLQHAMLSDPTGRQILRERPRITSTSLDLDYLRSLPDNTIGKSYITWLDREGVSPDTRVPVRYIDNEELAYIFQRYRECHDFYHAITGLPIIIEGEISVKVLEYMNIGIPMSGLGALFAPLRLKPSQRKRLREIYYPWAIKNGLYSKPLINVYWEKILDKDINEFRREMGIEQPPDLRDLRKEYFAKKRREKELKAAAAAATVTQRQRQQQRATATAANATSASSANVKPSNTAGAM</sequence>